<gene>
    <name evidence="1" type="primary">psbF</name>
</gene>
<organism>
    <name type="scientific">Ipomoea quamoclit</name>
    <name type="common">Cypress vine</name>
    <name type="synonym">Convolvulus pennatus</name>
    <dbReference type="NCBI Taxonomy" id="89660"/>
    <lineage>
        <taxon>Eukaryota</taxon>
        <taxon>Viridiplantae</taxon>
        <taxon>Streptophyta</taxon>
        <taxon>Embryophyta</taxon>
        <taxon>Tracheophyta</taxon>
        <taxon>Spermatophyta</taxon>
        <taxon>Magnoliopsida</taxon>
        <taxon>eudicotyledons</taxon>
        <taxon>Gunneridae</taxon>
        <taxon>Pentapetalae</taxon>
        <taxon>asterids</taxon>
        <taxon>lamiids</taxon>
        <taxon>Solanales</taxon>
        <taxon>Convolvulaceae</taxon>
        <taxon>Ipomoeeae</taxon>
        <taxon>Ipomoea</taxon>
    </lineage>
</organism>
<evidence type="ECO:0000255" key="1">
    <source>
        <dbReference type="HAMAP-Rule" id="MF_00643"/>
    </source>
</evidence>
<dbReference type="EMBL" id="AY100854">
    <property type="protein sequence ID" value="AAM55538.1"/>
    <property type="molecule type" value="Genomic_DNA"/>
</dbReference>
<dbReference type="RefSeq" id="YP_009663412.1">
    <property type="nucleotide sequence ID" value="NC_042941.1"/>
</dbReference>
<dbReference type="SMR" id="Q7H8L3"/>
<dbReference type="GeneID" id="40491635"/>
<dbReference type="GO" id="GO:0009535">
    <property type="term" value="C:chloroplast thylakoid membrane"/>
    <property type="evidence" value="ECO:0007669"/>
    <property type="project" value="UniProtKB-SubCell"/>
</dbReference>
<dbReference type="GO" id="GO:0009539">
    <property type="term" value="C:photosystem II reaction center"/>
    <property type="evidence" value="ECO:0007669"/>
    <property type="project" value="InterPro"/>
</dbReference>
<dbReference type="GO" id="GO:0009055">
    <property type="term" value="F:electron transfer activity"/>
    <property type="evidence" value="ECO:0007669"/>
    <property type="project" value="UniProtKB-UniRule"/>
</dbReference>
<dbReference type="GO" id="GO:0020037">
    <property type="term" value="F:heme binding"/>
    <property type="evidence" value="ECO:0007669"/>
    <property type="project" value="InterPro"/>
</dbReference>
<dbReference type="GO" id="GO:0005506">
    <property type="term" value="F:iron ion binding"/>
    <property type="evidence" value="ECO:0007669"/>
    <property type="project" value="UniProtKB-UniRule"/>
</dbReference>
<dbReference type="GO" id="GO:0009767">
    <property type="term" value="P:photosynthetic electron transport chain"/>
    <property type="evidence" value="ECO:0007669"/>
    <property type="project" value="InterPro"/>
</dbReference>
<dbReference type="HAMAP" id="MF_00643">
    <property type="entry name" value="PSII_PsbF"/>
    <property type="match status" value="1"/>
</dbReference>
<dbReference type="InterPro" id="IPR006241">
    <property type="entry name" value="PSII_cyt_b559_bsu"/>
</dbReference>
<dbReference type="InterPro" id="IPR006216">
    <property type="entry name" value="PSII_cyt_b559_CS"/>
</dbReference>
<dbReference type="InterPro" id="IPR013081">
    <property type="entry name" value="PSII_cyt_b559_N"/>
</dbReference>
<dbReference type="NCBIfam" id="TIGR01333">
    <property type="entry name" value="cyt_b559_beta"/>
    <property type="match status" value="1"/>
</dbReference>
<dbReference type="Pfam" id="PF00283">
    <property type="entry name" value="Cytochrom_B559"/>
    <property type="match status" value="1"/>
</dbReference>
<dbReference type="PIRSF" id="PIRSF000037">
    <property type="entry name" value="PsbF"/>
    <property type="match status" value="1"/>
</dbReference>
<dbReference type="SUPFAM" id="SSF161045">
    <property type="entry name" value="Cytochrome b559 subunits"/>
    <property type="match status" value="1"/>
</dbReference>
<dbReference type="PROSITE" id="PS00537">
    <property type="entry name" value="CYTOCHROME_B559"/>
    <property type="match status" value="1"/>
</dbReference>
<comment type="function">
    <text evidence="1">This b-type cytochrome is tightly associated with the reaction center of photosystem II (PSII). PSII is a light-driven water:plastoquinone oxidoreductase that uses light energy to abstract electrons from H(2)O, generating O(2) and a proton gradient subsequently used for ATP formation. It consists of a core antenna complex that captures photons, and an electron transfer chain that converts photonic excitation into a charge separation.</text>
</comment>
<comment type="cofactor">
    <cofactor evidence="1">
        <name>heme b</name>
        <dbReference type="ChEBI" id="CHEBI:60344"/>
    </cofactor>
    <text evidence="1">With its partner (PsbE) binds heme. PSII binds additional chlorophylls, carotenoids and specific lipids.</text>
</comment>
<comment type="subunit">
    <text evidence="1">Heterodimer of an alpha subunit and a beta subunit. PSII is composed of 1 copy each of membrane proteins PsbA, PsbB, PsbC, PsbD, PsbE, PsbF, PsbH, PsbI, PsbJ, PsbK, PsbL, PsbM, PsbT, PsbX, PsbY, PsbZ, Psb30/Ycf12, at least 3 peripheral proteins of the oxygen-evolving complex and a large number of cofactors. It forms dimeric complexes.</text>
</comment>
<comment type="subcellular location">
    <subcellularLocation>
        <location evidence="1">Plastid</location>
        <location evidence="1">Chloroplast thylakoid membrane</location>
        <topology evidence="1">Single-pass membrane protein</topology>
    </subcellularLocation>
</comment>
<comment type="similarity">
    <text evidence="1">Belongs to the PsbE/PsbF family.</text>
</comment>
<geneLocation type="chloroplast"/>
<accession>Q7H8L3</accession>
<feature type="chain" id="PRO_0000200408" description="Cytochrome b559 subunit beta">
    <location>
        <begin position="1"/>
        <end position="39"/>
    </location>
</feature>
<feature type="transmembrane region" description="Helical" evidence="1">
    <location>
        <begin position="14"/>
        <end position="30"/>
    </location>
</feature>
<feature type="binding site" description="axial binding residue" evidence="1">
    <location>
        <position position="18"/>
    </location>
    <ligand>
        <name>heme</name>
        <dbReference type="ChEBI" id="CHEBI:30413"/>
        <note>ligand shared with alpha subunit</note>
    </ligand>
    <ligandPart>
        <name>Fe</name>
        <dbReference type="ChEBI" id="CHEBI:18248"/>
    </ligandPart>
</feature>
<name>PSBF_IPOQU</name>
<reference key="1">
    <citation type="journal article" date="2002" name="Am. J. Bot.">
        <title>Monophyly of the Convolvulaceae and circumscription of their major lineages based on DNA sequences of multiple chloroplast loci.</title>
        <authorList>
            <person name="Stefanovic S."/>
            <person name="Krueger L."/>
            <person name="Olmstead R.G."/>
        </authorList>
        <dbReference type="AGRICOLA" id="IND23320510"/>
    </citation>
    <scope>NUCLEOTIDE SEQUENCE [GENOMIC DNA]</scope>
</reference>
<keyword id="KW-0150">Chloroplast</keyword>
<keyword id="KW-0249">Electron transport</keyword>
<keyword id="KW-0349">Heme</keyword>
<keyword id="KW-0408">Iron</keyword>
<keyword id="KW-0472">Membrane</keyword>
<keyword id="KW-0479">Metal-binding</keyword>
<keyword id="KW-0602">Photosynthesis</keyword>
<keyword id="KW-0604">Photosystem II</keyword>
<keyword id="KW-0934">Plastid</keyword>
<keyword id="KW-0793">Thylakoid</keyword>
<keyword id="KW-0812">Transmembrane</keyword>
<keyword id="KW-1133">Transmembrane helix</keyword>
<keyword id="KW-0813">Transport</keyword>
<proteinExistence type="inferred from homology"/>
<protein>
    <recommendedName>
        <fullName evidence="1">Cytochrome b559 subunit beta</fullName>
    </recommendedName>
    <alternativeName>
        <fullName evidence="1">PSII reaction center subunit VI</fullName>
    </alternativeName>
</protein>
<sequence length="39" mass="4484">MTIDRTYPIFTVRWLAVHGLAVPTVFFLGSISAMQFIQR</sequence>